<sequence>MPDKPTKEKLMEQLKGGIIVSCQALPGEPLYSETGGIMPLLAKAAQEAGAVGIRANSVRDIKEIQAITDLPIIGIIKKDYPPQEPFITATMTEVDQLAALNIAVIAMDCTKRDRHDGLDIASFIRQVKEKYPNQLLMADISTFDEGLVAHQAGIDFVGTTLSGYTPYSRQEAGPDVALIEALCKAGIAVIAEGKIHSPEEAKKINDLGVAGIVVGGAITRPKEIAERFIEALKS</sequence>
<gene>
    <name evidence="1" type="primary">nanE</name>
    <name type="ordered locus">MGAS10750_Spy0206</name>
</gene>
<name>NANE_STRPF</name>
<organism>
    <name type="scientific">Streptococcus pyogenes serotype M4 (strain MGAS10750)</name>
    <dbReference type="NCBI Taxonomy" id="370554"/>
    <lineage>
        <taxon>Bacteria</taxon>
        <taxon>Bacillati</taxon>
        <taxon>Bacillota</taxon>
        <taxon>Bacilli</taxon>
        <taxon>Lactobacillales</taxon>
        <taxon>Streptococcaceae</taxon>
        <taxon>Streptococcus</taxon>
    </lineage>
</organism>
<dbReference type="EC" id="5.1.3.9" evidence="1"/>
<dbReference type="EMBL" id="CP000262">
    <property type="protein sequence ID" value="ABF37156.1"/>
    <property type="molecule type" value="Genomic_DNA"/>
</dbReference>
<dbReference type="SMR" id="Q1J8K5"/>
<dbReference type="KEGG" id="spi:MGAS10750_Spy0206"/>
<dbReference type="HOGENOM" id="CLU_086300_1_0_9"/>
<dbReference type="UniPathway" id="UPA00629">
    <property type="reaction ID" value="UER00682"/>
</dbReference>
<dbReference type="Proteomes" id="UP000002434">
    <property type="component" value="Chromosome"/>
</dbReference>
<dbReference type="GO" id="GO:0005829">
    <property type="term" value="C:cytosol"/>
    <property type="evidence" value="ECO:0007669"/>
    <property type="project" value="TreeGrafter"/>
</dbReference>
<dbReference type="GO" id="GO:0047465">
    <property type="term" value="F:N-acylglucosamine-6-phosphate 2-epimerase activity"/>
    <property type="evidence" value="ECO:0007669"/>
    <property type="project" value="UniProtKB-EC"/>
</dbReference>
<dbReference type="GO" id="GO:0005975">
    <property type="term" value="P:carbohydrate metabolic process"/>
    <property type="evidence" value="ECO:0007669"/>
    <property type="project" value="UniProtKB-UniRule"/>
</dbReference>
<dbReference type="GO" id="GO:0006053">
    <property type="term" value="P:N-acetylmannosamine catabolic process"/>
    <property type="evidence" value="ECO:0007669"/>
    <property type="project" value="TreeGrafter"/>
</dbReference>
<dbReference type="GO" id="GO:0019262">
    <property type="term" value="P:N-acetylneuraminate catabolic process"/>
    <property type="evidence" value="ECO:0007669"/>
    <property type="project" value="UniProtKB-UniRule"/>
</dbReference>
<dbReference type="CDD" id="cd04729">
    <property type="entry name" value="NanE"/>
    <property type="match status" value="1"/>
</dbReference>
<dbReference type="FunFam" id="3.20.20.70:FF:000035">
    <property type="entry name" value="Putative N-acetylmannosamine-6-phosphate 2-epimerase"/>
    <property type="match status" value="1"/>
</dbReference>
<dbReference type="Gene3D" id="3.20.20.70">
    <property type="entry name" value="Aldolase class I"/>
    <property type="match status" value="1"/>
</dbReference>
<dbReference type="HAMAP" id="MF_01235">
    <property type="entry name" value="ManNAc6P_epimer"/>
    <property type="match status" value="1"/>
</dbReference>
<dbReference type="InterPro" id="IPR013785">
    <property type="entry name" value="Aldolase_TIM"/>
</dbReference>
<dbReference type="InterPro" id="IPR007260">
    <property type="entry name" value="NanE"/>
</dbReference>
<dbReference type="InterPro" id="IPR011060">
    <property type="entry name" value="RibuloseP-bd_barrel"/>
</dbReference>
<dbReference type="NCBIfam" id="NF002231">
    <property type="entry name" value="PRK01130.1"/>
    <property type="match status" value="1"/>
</dbReference>
<dbReference type="PANTHER" id="PTHR36204">
    <property type="entry name" value="N-ACETYLMANNOSAMINE-6-PHOSPHATE 2-EPIMERASE-RELATED"/>
    <property type="match status" value="1"/>
</dbReference>
<dbReference type="PANTHER" id="PTHR36204:SF1">
    <property type="entry name" value="N-ACETYLMANNOSAMINE-6-PHOSPHATE 2-EPIMERASE-RELATED"/>
    <property type="match status" value="1"/>
</dbReference>
<dbReference type="Pfam" id="PF04131">
    <property type="entry name" value="NanE"/>
    <property type="match status" value="1"/>
</dbReference>
<dbReference type="SUPFAM" id="SSF51366">
    <property type="entry name" value="Ribulose-phoshate binding barrel"/>
    <property type="match status" value="1"/>
</dbReference>
<evidence type="ECO:0000255" key="1">
    <source>
        <dbReference type="HAMAP-Rule" id="MF_01235"/>
    </source>
</evidence>
<keyword id="KW-0119">Carbohydrate metabolism</keyword>
<keyword id="KW-0413">Isomerase</keyword>
<accession>Q1J8K5</accession>
<comment type="function">
    <text evidence="1">Converts N-acetylmannosamine-6-phosphate (ManNAc-6-P) to N-acetylglucosamine-6-phosphate (GlcNAc-6-P).</text>
</comment>
<comment type="catalytic activity">
    <reaction evidence="1">
        <text>an N-acyl-D-glucosamine 6-phosphate = an N-acyl-D-mannosamine 6-phosphate</text>
        <dbReference type="Rhea" id="RHEA:23932"/>
        <dbReference type="ChEBI" id="CHEBI:57599"/>
        <dbReference type="ChEBI" id="CHEBI:57666"/>
        <dbReference type="EC" id="5.1.3.9"/>
    </reaction>
</comment>
<comment type="pathway">
    <text evidence="1">Amino-sugar metabolism; N-acetylneuraminate degradation; D-fructose 6-phosphate from N-acetylneuraminate: step 3/5.</text>
</comment>
<comment type="similarity">
    <text evidence="1">Belongs to the NanE family.</text>
</comment>
<feature type="chain" id="PRO_0000301494" description="Putative N-acetylmannosamine-6-phosphate 2-epimerase">
    <location>
        <begin position="1"/>
        <end position="234"/>
    </location>
</feature>
<reference key="1">
    <citation type="journal article" date="2006" name="Proc. Natl. Acad. Sci. U.S.A.">
        <title>Molecular genetic anatomy of inter- and intraserotype variation in the human bacterial pathogen group A Streptococcus.</title>
        <authorList>
            <person name="Beres S.B."/>
            <person name="Richter E.W."/>
            <person name="Nagiec M.J."/>
            <person name="Sumby P."/>
            <person name="Porcella S.F."/>
            <person name="DeLeo F.R."/>
            <person name="Musser J.M."/>
        </authorList>
    </citation>
    <scope>NUCLEOTIDE SEQUENCE [LARGE SCALE GENOMIC DNA]</scope>
    <source>
        <strain>MGAS10750</strain>
    </source>
</reference>
<protein>
    <recommendedName>
        <fullName evidence="1">Putative N-acetylmannosamine-6-phosphate 2-epimerase</fullName>
        <ecNumber evidence="1">5.1.3.9</ecNumber>
    </recommendedName>
    <alternativeName>
        <fullName evidence="1">ManNAc-6-P epimerase</fullName>
    </alternativeName>
</protein>
<proteinExistence type="inferred from homology"/>